<feature type="chain" id="PRO_0000204397" description="Photosystem I reaction center subunit IV">
    <location>
        <begin position="1"/>
        <end position="62"/>
    </location>
</feature>
<accession>P69403</accession>
<accession>P29789</accession>
<gene>
    <name type="primary">psaE</name>
</gene>
<proteinExistence type="inferred from homology"/>
<keyword id="KW-0150">Chloroplast</keyword>
<keyword id="KW-0472">Membrane</keyword>
<keyword id="KW-0602">Photosynthesis</keyword>
<keyword id="KW-0603">Photosystem I</keyword>
<keyword id="KW-0934">Plastid</keyword>
<keyword id="KW-0793">Thylakoid</keyword>
<organism>
    <name type="scientific">Porphyra purpurea</name>
    <name type="common">Red seaweed</name>
    <name type="synonym">Ulva purpurea</name>
    <dbReference type="NCBI Taxonomy" id="2787"/>
    <lineage>
        <taxon>Eukaryota</taxon>
        <taxon>Rhodophyta</taxon>
        <taxon>Bangiophyceae</taxon>
        <taxon>Bangiales</taxon>
        <taxon>Bangiaceae</taxon>
        <taxon>Porphyra</taxon>
    </lineage>
</organism>
<evidence type="ECO:0000250" key="1"/>
<evidence type="ECO:0000305" key="2"/>
<dbReference type="EMBL" id="U38804">
    <property type="protein sequence ID" value="AAC08212.1"/>
    <property type="molecule type" value="Genomic_DNA"/>
</dbReference>
<dbReference type="PIR" id="S73247">
    <property type="entry name" value="S73247"/>
</dbReference>
<dbReference type="RefSeq" id="NP_053936.1">
    <property type="nucleotide sequence ID" value="NC_000925.1"/>
</dbReference>
<dbReference type="SMR" id="P69403"/>
<dbReference type="GeneID" id="809955"/>
<dbReference type="GO" id="GO:0009535">
    <property type="term" value="C:chloroplast thylakoid membrane"/>
    <property type="evidence" value="ECO:0007669"/>
    <property type="project" value="UniProtKB-SubCell"/>
</dbReference>
<dbReference type="GO" id="GO:0009538">
    <property type="term" value="C:photosystem I reaction center"/>
    <property type="evidence" value="ECO:0007669"/>
    <property type="project" value="InterPro"/>
</dbReference>
<dbReference type="GO" id="GO:0015979">
    <property type="term" value="P:photosynthesis"/>
    <property type="evidence" value="ECO:0007669"/>
    <property type="project" value="UniProtKB-UniRule"/>
</dbReference>
<dbReference type="Gene3D" id="2.30.30.50">
    <property type="match status" value="1"/>
</dbReference>
<dbReference type="HAMAP" id="MF_00613">
    <property type="entry name" value="PSI_PsaE"/>
    <property type="match status" value="1"/>
</dbReference>
<dbReference type="InterPro" id="IPR008990">
    <property type="entry name" value="Elect_transpt_acc-like_dom_sf"/>
</dbReference>
<dbReference type="InterPro" id="IPR003375">
    <property type="entry name" value="PSI_PsaE"/>
</dbReference>
<dbReference type="NCBIfam" id="NF002745">
    <property type="entry name" value="PRK02749.1"/>
    <property type="match status" value="1"/>
</dbReference>
<dbReference type="PANTHER" id="PTHR34549">
    <property type="entry name" value="PHOTOSYSTEM I REACTION CENTER SUBUNIT IV A, CHLOROPLASTIC-RELATED"/>
    <property type="match status" value="1"/>
</dbReference>
<dbReference type="PANTHER" id="PTHR34549:SF2">
    <property type="entry name" value="PHOTOSYSTEM I SUBUNIT IV"/>
    <property type="match status" value="1"/>
</dbReference>
<dbReference type="Pfam" id="PF02427">
    <property type="entry name" value="PSI_PsaE"/>
    <property type="match status" value="1"/>
</dbReference>
<dbReference type="SUPFAM" id="SSF50090">
    <property type="entry name" value="Electron transport accessory proteins"/>
    <property type="match status" value="1"/>
</dbReference>
<sequence length="62" mass="7172">MERGSKVKILRKESYWYQEIGTVAAMDKSGIKYPVLVRFEKVNYNNVNTNSFADNELIDLGK</sequence>
<name>PSAE_PORPU</name>
<geneLocation type="chloroplast"/>
<protein>
    <recommendedName>
        <fullName>Photosystem I reaction center subunit IV</fullName>
        <shortName>PSI-E</shortName>
    </recommendedName>
</protein>
<reference key="1">
    <citation type="journal article" date="1995" name="Plant Mol. Biol. Rep.">
        <title>Complete nucleotide sequence of the Porphyra purpurea chloroplast genome.</title>
        <authorList>
            <person name="Reith M.E."/>
            <person name="Munholland J."/>
        </authorList>
    </citation>
    <scope>NUCLEOTIDE SEQUENCE [LARGE SCALE GENOMIC DNA]</scope>
    <source>
        <strain>Avonport</strain>
    </source>
</reference>
<comment type="function">
    <text evidence="1">Stabilizes the interaction between PsaC and the PSI core, assists the docking of the ferredoxin to PSI and interacts with ferredoxin-NADP oxidoreductase.</text>
</comment>
<comment type="subcellular location">
    <subcellularLocation>
        <location evidence="1">Plastid</location>
        <location evidence="1">Chloroplast thylakoid membrane</location>
        <topology evidence="1">Peripheral membrane protein</topology>
    </subcellularLocation>
</comment>
<comment type="similarity">
    <text evidence="2">Belongs to the PsaE family.</text>
</comment>